<reference key="1">
    <citation type="submission" date="1995-01" db="EMBL/GenBank/DDBJ databases">
        <authorList>
            <person name="Hungerer C."/>
            <person name="Weiss D."/>
            <person name="Thauer R.K."/>
            <person name="Jahn D."/>
        </authorList>
    </citation>
    <scope>NUCLEOTIDE SEQUENCE [GENOMIC DNA]</scope>
    <source>
        <strain>ATCC BAA-927 / DSM 2133 / JCM 14651 / NBRC 100331 / OCM 82 / Marburg</strain>
    </source>
</reference>
<reference key="2">
    <citation type="journal article" date="2010" name="J. Bacteriol.">
        <title>Complete genome sequence of Methanothermobacter marburgensis, a methanoarchaeon model organism.</title>
        <authorList>
            <person name="Liesegang H."/>
            <person name="Kaster A.K."/>
            <person name="Wiezer A."/>
            <person name="Goenrich M."/>
            <person name="Wollherr A."/>
            <person name="Seedorf H."/>
            <person name="Gottschalk G."/>
            <person name="Thauer R.K."/>
        </authorList>
    </citation>
    <scope>NUCLEOTIDE SEQUENCE [LARGE SCALE GENOMIC DNA]</scope>
    <source>
        <strain>ATCC BAA-927 / DSM 2133 / JCM 14651 / NBRC 100331 / OCM 82 / Marburg</strain>
    </source>
</reference>
<accession>P42811</accession>
<accession>D9PXN2</accession>
<protein>
    <recommendedName>
        <fullName>Putative 26S proteasome regulatory subunit homolog MTBMA_c13930</fullName>
    </recommendedName>
</protein>
<evidence type="ECO:0000250" key="1"/>
<evidence type="ECO:0000255" key="2"/>
<evidence type="ECO:0000305" key="3"/>
<name>PRS2_METTM</name>
<gene>
    <name type="ordered locus">MTBMA_c13930</name>
</gene>
<proteinExistence type="inferred from homology"/>
<keyword id="KW-0067">ATP-binding</keyword>
<keyword id="KW-0547">Nucleotide-binding</keyword>
<keyword id="KW-0647">Proteasome</keyword>
<comment type="function">
    <text evidence="1">The 26S proteasome is involved in the ATP-dependent degradation of ubiquitinated proteins. The regulatory (or ATPase) complex confers ATP dependency and substrate specificity to the 26S complex (By similarity).</text>
</comment>
<comment type="similarity">
    <text evidence="3">Belongs to the AAA ATPase family.</text>
</comment>
<comment type="sequence caution" evidence="3">
    <conflict type="erroneous initiation">
        <sequence resource="EMBL-CDS" id="ADL58980"/>
    </conflict>
    <text>Truncated N-terminus.</text>
</comment>
<organism>
    <name type="scientific">Methanothermobacter marburgensis (strain ATCC BAA-927 / DSM 2133 / JCM 14651 / NBRC 100331 / OCM 82 / Marburg)</name>
    <name type="common">Methanobacterium thermoautotrophicum</name>
    <dbReference type="NCBI Taxonomy" id="79929"/>
    <lineage>
        <taxon>Archaea</taxon>
        <taxon>Methanobacteriati</taxon>
        <taxon>Methanobacteriota</taxon>
        <taxon>Methanomada group</taxon>
        <taxon>Methanobacteria</taxon>
        <taxon>Methanobacteriales</taxon>
        <taxon>Methanobacteriaceae</taxon>
        <taxon>Methanothermobacter</taxon>
    </lineage>
</organism>
<sequence>MVKFNNIVYDPQLTDKKFPVKASDPEREAKLVVLQPVGYPFVCNLMESPRIDAVNKELFEIYARDQWEGFSATEGSYLFDQKLLPDYAFKIIRAHPDGSKITRNTSIILLENEREEFHEVKSDITMDDVIGQEDAKIKCRIIMRYLEDPDRFRDWAPRNVLFHGSPGTGKTMLAKSLANELRVPLYLIKATSLIGEHVGDGARQIHELYELASKTAPSVIFIDEMDAIGLDRRFQSLRGDVSEVVNALLTEMDGINQNWGVVTIGATNNPELLDNAIRSRFEEEIEFKLPGDDERRMMLEKYIETMPLDVDFSVDKLVKLTKGMSGRDIKERVLKTALHRALADESPRVEREHIEYALKERDLKSEPRHMFA</sequence>
<feature type="chain" id="PRO_0000084756" description="Putative 26S proteasome regulatory subunit homolog MTBMA_c13930">
    <location>
        <begin position="1"/>
        <end position="372"/>
    </location>
</feature>
<feature type="binding site" evidence="2">
    <location>
        <begin position="164"/>
        <end position="171"/>
    </location>
    <ligand>
        <name>ATP</name>
        <dbReference type="ChEBI" id="CHEBI:30616"/>
    </ligand>
</feature>
<dbReference type="EMBL" id="X83691">
    <property type="protein sequence ID" value="CAA58665.1"/>
    <property type="molecule type" value="Genomic_DNA"/>
</dbReference>
<dbReference type="EMBL" id="CP001710">
    <property type="protein sequence ID" value="ADL58980.1"/>
    <property type="status" value="ALT_INIT"/>
    <property type="molecule type" value="Genomic_DNA"/>
</dbReference>
<dbReference type="PIR" id="S51137">
    <property type="entry name" value="S51137"/>
</dbReference>
<dbReference type="RefSeq" id="WP_013296192.1">
    <property type="nucleotide sequence ID" value="NC_014408.1"/>
</dbReference>
<dbReference type="SMR" id="P42811"/>
<dbReference type="STRING" id="79929.MTBMA_c13930"/>
<dbReference type="PaxDb" id="79929-MTBMA_c13930"/>
<dbReference type="GeneID" id="9705102"/>
<dbReference type="KEGG" id="mmg:MTBMA_c13930"/>
<dbReference type="PATRIC" id="fig|79929.8.peg.1357"/>
<dbReference type="HOGENOM" id="CLU_000688_21_3_2"/>
<dbReference type="OrthoDB" id="77269at2157"/>
<dbReference type="Proteomes" id="UP000000345">
    <property type="component" value="Chromosome"/>
</dbReference>
<dbReference type="GO" id="GO:0000502">
    <property type="term" value="C:proteasome complex"/>
    <property type="evidence" value="ECO:0007669"/>
    <property type="project" value="UniProtKB-KW"/>
</dbReference>
<dbReference type="GO" id="GO:0005524">
    <property type="term" value="F:ATP binding"/>
    <property type="evidence" value="ECO:0007669"/>
    <property type="project" value="UniProtKB-KW"/>
</dbReference>
<dbReference type="GO" id="GO:0016887">
    <property type="term" value="F:ATP hydrolysis activity"/>
    <property type="evidence" value="ECO:0007669"/>
    <property type="project" value="InterPro"/>
</dbReference>
<dbReference type="GO" id="GO:0004176">
    <property type="term" value="F:ATP-dependent peptidase activity"/>
    <property type="evidence" value="ECO:0007669"/>
    <property type="project" value="TreeGrafter"/>
</dbReference>
<dbReference type="GO" id="GO:0006508">
    <property type="term" value="P:proteolysis"/>
    <property type="evidence" value="ECO:0007669"/>
    <property type="project" value="TreeGrafter"/>
</dbReference>
<dbReference type="CDD" id="cd19481">
    <property type="entry name" value="RecA-like_protease"/>
    <property type="match status" value="1"/>
</dbReference>
<dbReference type="Gene3D" id="1.10.8.60">
    <property type="match status" value="1"/>
</dbReference>
<dbReference type="Gene3D" id="3.40.50.300">
    <property type="entry name" value="P-loop containing nucleotide triphosphate hydrolases"/>
    <property type="match status" value="1"/>
</dbReference>
<dbReference type="InterPro" id="IPR003593">
    <property type="entry name" value="AAA+_ATPase"/>
</dbReference>
<dbReference type="InterPro" id="IPR003959">
    <property type="entry name" value="ATPase_AAA_core"/>
</dbReference>
<dbReference type="InterPro" id="IPR003960">
    <property type="entry name" value="ATPase_AAA_CS"/>
</dbReference>
<dbReference type="InterPro" id="IPR027417">
    <property type="entry name" value="P-loop_NTPase"/>
</dbReference>
<dbReference type="PANTHER" id="PTHR23076:SF97">
    <property type="entry name" value="ATP-DEPENDENT ZINC METALLOPROTEASE YME1L1"/>
    <property type="match status" value="1"/>
</dbReference>
<dbReference type="PANTHER" id="PTHR23076">
    <property type="entry name" value="METALLOPROTEASE M41 FTSH"/>
    <property type="match status" value="1"/>
</dbReference>
<dbReference type="Pfam" id="PF00004">
    <property type="entry name" value="AAA"/>
    <property type="match status" value="1"/>
</dbReference>
<dbReference type="Pfam" id="PF23902">
    <property type="entry name" value="AAA_lid_PRS2_C"/>
    <property type="match status" value="1"/>
</dbReference>
<dbReference type="Pfam" id="PF23900">
    <property type="entry name" value="PRS2_N"/>
    <property type="match status" value="1"/>
</dbReference>
<dbReference type="SMART" id="SM00382">
    <property type="entry name" value="AAA"/>
    <property type="match status" value="1"/>
</dbReference>
<dbReference type="SUPFAM" id="SSF52540">
    <property type="entry name" value="P-loop containing nucleoside triphosphate hydrolases"/>
    <property type="match status" value="1"/>
</dbReference>
<dbReference type="PROSITE" id="PS00674">
    <property type="entry name" value="AAA"/>
    <property type="match status" value="1"/>
</dbReference>